<keyword id="KW-0028">Amino-acid biosynthesis</keyword>
<keyword id="KW-0963">Cytoplasm</keyword>
<keyword id="KW-0903">Direct protein sequencing</keyword>
<keyword id="KW-0315">Glutamine amidotransferase</keyword>
<keyword id="KW-0368">Histidine biosynthesis</keyword>
<keyword id="KW-0378">Hydrolase</keyword>
<keyword id="KW-0456">Lyase</keyword>
<keyword id="KW-1185">Reference proteome</keyword>
<sequence length="196" mass="21653">MNVVILDTGCANLNSVKSAIARHGYEPKVSRDPDVVLLADKLFLPGVGTAQAAMDQVRERELFDLIKACTQPVLGICLGMQLLGRRSEESNGVDLLGIIDEDVPKMTDFGLPLPHMGWNRVYPQAGNRLFQGIEDGAYFYFVHSYAMPVNPWTIAQCNYGEPFTAAVQKDNFYGVQFHPERSGAAGAKLLKNFLEM</sequence>
<accession>P60595</accession>
<accession>P10375</accession>
<gene>
    <name type="primary">hisH</name>
    <name type="ordered locus">b2023</name>
    <name type="ordered locus">JW2005</name>
</gene>
<organism>
    <name type="scientific">Escherichia coli (strain K12)</name>
    <dbReference type="NCBI Taxonomy" id="83333"/>
    <lineage>
        <taxon>Bacteria</taxon>
        <taxon>Pseudomonadati</taxon>
        <taxon>Pseudomonadota</taxon>
        <taxon>Gammaproteobacteria</taxon>
        <taxon>Enterobacterales</taxon>
        <taxon>Enterobacteriaceae</taxon>
        <taxon>Escherichia</taxon>
    </lineage>
</organism>
<comment type="function">
    <text evidence="2">IGPS catalyzes the conversion of PRFAR and glutamine to IGP, AICAR and glutamate. The HisH subunit catalyzes the hydrolysis of glutamine to glutamate and ammonia as part of the synthesis of IGP and AICAR. The resulting ammonia molecule is channeled to the active site of HisF.</text>
</comment>
<comment type="catalytic activity">
    <reaction evidence="2">
        <text>5-[(5-phospho-1-deoxy-D-ribulos-1-ylimino)methylamino]-1-(5-phospho-beta-D-ribosyl)imidazole-4-carboxamide + L-glutamine = D-erythro-1-(imidazol-4-yl)glycerol 3-phosphate + 5-amino-1-(5-phospho-beta-D-ribosyl)imidazole-4-carboxamide + L-glutamate + H(+)</text>
        <dbReference type="Rhea" id="RHEA:24793"/>
        <dbReference type="ChEBI" id="CHEBI:15378"/>
        <dbReference type="ChEBI" id="CHEBI:29985"/>
        <dbReference type="ChEBI" id="CHEBI:58278"/>
        <dbReference type="ChEBI" id="CHEBI:58359"/>
        <dbReference type="ChEBI" id="CHEBI:58475"/>
        <dbReference type="ChEBI" id="CHEBI:58525"/>
        <dbReference type="EC" id="4.3.2.10"/>
    </reaction>
</comment>
<comment type="catalytic activity">
    <reaction evidence="2">
        <text>L-glutamine + H2O = L-glutamate + NH4(+)</text>
        <dbReference type="Rhea" id="RHEA:15889"/>
        <dbReference type="ChEBI" id="CHEBI:15377"/>
        <dbReference type="ChEBI" id="CHEBI:28938"/>
        <dbReference type="ChEBI" id="CHEBI:29985"/>
        <dbReference type="ChEBI" id="CHEBI:58359"/>
        <dbReference type="EC" id="3.5.1.2"/>
    </reaction>
</comment>
<comment type="biophysicochemical properties">
    <kinetics>
        <KM evidence="2">1.5 uM for glutamine</KM>
    </kinetics>
    <phDependence>
        <text evidence="2">Optimum pH is 6-8.</text>
    </phDependence>
</comment>
<comment type="pathway">
    <text>Amino-acid biosynthesis; L-histidine biosynthesis; L-histidine from 5-phospho-alpha-D-ribose 1-diphosphate: step 5/9.</text>
</comment>
<comment type="subunit">
    <text evidence="2">Heterodimer of HisH and HisF.</text>
</comment>
<comment type="interaction">
    <interactant intactId="EBI-1126953">
        <id>P60595</id>
    </interactant>
    <interactant intactId="EBI-9151168">
        <id>P60664</id>
        <label>hisF</label>
    </interactant>
    <organismsDiffer>false</organismsDiffer>
    <experiments>2</experiments>
</comment>
<comment type="subcellular location">
    <subcellularLocation>
        <location>Cytoplasm</location>
    </subcellularLocation>
</comment>
<proteinExistence type="evidence at protein level"/>
<name>HIS5_ECOLI</name>
<feature type="chain" id="PRO_0000152373" description="Imidazole glycerol phosphate synthase subunit HisH">
    <location>
        <begin position="1"/>
        <end position="196"/>
    </location>
</feature>
<feature type="domain" description="Glutamine amidotransferase type-1">
    <location>
        <begin position="2"/>
        <end position="196"/>
    </location>
</feature>
<feature type="active site" description="Nucleophile" evidence="1">
    <location>
        <position position="77"/>
    </location>
</feature>
<feature type="active site" evidence="1">
    <location>
        <position position="178"/>
    </location>
</feature>
<feature type="active site" evidence="1">
    <location>
        <position position="180"/>
    </location>
</feature>
<protein>
    <recommendedName>
        <fullName>Imidazole glycerol phosphate synthase subunit HisH</fullName>
        <ecNumber evidence="2">4.3.2.10</ecNumber>
    </recommendedName>
    <alternativeName>
        <fullName>IGP synthase glutaminase subunit</fullName>
        <ecNumber evidence="2">3.5.1.2</ecNumber>
    </alternativeName>
    <alternativeName>
        <fullName>IGP synthase subunit HisH</fullName>
    </alternativeName>
    <alternativeName>
        <fullName>ImGP synthase subunit HisH</fullName>
        <shortName>IGPS subunit HisH</shortName>
    </alternativeName>
</protein>
<reference key="1">
    <citation type="journal article" date="1988" name="J. Mol. Biol.">
        <title>Structure and function of the Salmonella typhimurium and Escherichia coli K-12 histidine operons.</title>
        <authorList>
            <person name="Carlomagno M.S."/>
            <person name="Chiariotti L."/>
            <person name="Alifano P."/>
            <person name="Nappo A.G."/>
            <person name="Bruni C.B."/>
        </authorList>
    </citation>
    <scope>NUCLEOTIDE SEQUENCE [GENOMIC DNA]</scope>
    <source>
        <strain>K12</strain>
    </source>
</reference>
<reference key="2">
    <citation type="journal article" date="1996" name="DNA Res.">
        <title>A 460-kb DNA sequence of the Escherichia coli K-12 genome corresponding to the 40.1-50.0 min region on the linkage map.</title>
        <authorList>
            <person name="Itoh T."/>
            <person name="Aiba H."/>
            <person name="Baba T."/>
            <person name="Fujita K."/>
            <person name="Hayashi K."/>
            <person name="Inada T."/>
            <person name="Isono K."/>
            <person name="Kasai H."/>
            <person name="Kimura S."/>
            <person name="Kitakawa M."/>
            <person name="Kitagawa M."/>
            <person name="Makino K."/>
            <person name="Miki T."/>
            <person name="Mizobuchi K."/>
            <person name="Mori H."/>
            <person name="Mori T."/>
            <person name="Motomura K."/>
            <person name="Nakade S."/>
            <person name="Nakamura Y."/>
            <person name="Nashimoto H."/>
            <person name="Nishio Y."/>
            <person name="Oshima T."/>
            <person name="Saito N."/>
            <person name="Sampei G."/>
            <person name="Seki Y."/>
            <person name="Sivasundaram S."/>
            <person name="Tagami H."/>
            <person name="Takeda J."/>
            <person name="Takemoto K."/>
            <person name="Wada C."/>
            <person name="Yamamoto Y."/>
            <person name="Horiuchi T."/>
        </authorList>
    </citation>
    <scope>NUCLEOTIDE SEQUENCE [LARGE SCALE GENOMIC DNA]</scope>
    <source>
        <strain>K12 / W3110 / ATCC 27325 / DSM 5911</strain>
    </source>
</reference>
<reference key="3">
    <citation type="journal article" date="1997" name="Science">
        <title>The complete genome sequence of Escherichia coli K-12.</title>
        <authorList>
            <person name="Blattner F.R."/>
            <person name="Plunkett G. III"/>
            <person name="Bloch C.A."/>
            <person name="Perna N.T."/>
            <person name="Burland V."/>
            <person name="Riley M."/>
            <person name="Collado-Vides J."/>
            <person name="Glasner J.D."/>
            <person name="Rode C.K."/>
            <person name="Mayhew G.F."/>
            <person name="Gregor J."/>
            <person name="Davis N.W."/>
            <person name="Kirkpatrick H.A."/>
            <person name="Goeden M.A."/>
            <person name="Rose D.J."/>
            <person name="Mau B."/>
            <person name="Shao Y."/>
        </authorList>
    </citation>
    <scope>NUCLEOTIDE SEQUENCE [LARGE SCALE GENOMIC DNA]</scope>
    <source>
        <strain>K12 / MG1655 / ATCC 47076</strain>
    </source>
</reference>
<reference key="4">
    <citation type="journal article" date="2006" name="Mol. Syst. Biol.">
        <title>Highly accurate genome sequences of Escherichia coli K-12 strains MG1655 and W3110.</title>
        <authorList>
            <person name="Hayashi K."/>
            <person name="Morooka N."/>
            <person name="Yamamoto Y."/>
            <person name="Fujita K."/>
            <person name="Isono K."/>
            <person name="Choi S."/>
            <person name="Ohtsubo E."/>
            <person name="Baba T."/>
            <person name="Wanner B.L."/>
            <person name="Mori H."/>
            <person name="Horiuchi T."/>
        </authorList>
    </citation>
    <scope>NUCLEOTIDE SEQUENCE [LARGE SCALE GENOMIC DNA]</scope>
    <source>
        <strain>K12 / W3110 / ATCC 27325 / DSM 5911</strain>
    </source>
</reference>
<reference key="5">
    <citation type="journal article" date="1993" name="Biochemistry">
        <title>Imidazole glycerol phosphate synthase: the glutamine amidotransferase in histidine biosynthesis.</title>
        <authorList>
            <person name="Klem T.J."/>
            <person name="Davisson V.J."/>
        </authorList>
    </citation>
    <scope>PROTEIN SEQUENCE OF 1-20</scope>
    <scope>CATALYTIC ACTIVITY</scope>
    <scope>BIOPHYSICOCHEMICAL PROPERTIES</scope>
    <scope>SUBUNIT</scope>
</reference>
<reference key="6">
    <citation type="journal article" date="2001" name="J. Struct. Biol.">
        <title>On the structure of hisH: protein structure prediction in the context of structural and functional genomics.</title>
        <authorList>
            <person name="O'Donoghue P."/>
            <person name="Amaro R.E."/>
            <person name="Luthey-Schulten Z."/>
        </authorList>
    </citation>
    <scope>STRUCTURE PREDICTION</scope>
</reference>
<evidence type="ECO:0000250" key="1"/>
<evidence type="ECO:0000269" key="2">
    <source>
    </source>
</evidence>
<dbReference type="EC" id="4.3.2.10" evidence="2"/>
<dbReference type="EC" id="3.5.1.2" evidence="2"/>
<dbReference type="EMBL" id="X13462">
    <property type="protein sequence ID" value="CAA31815.1"/>
    <property type="molecule type" value="Genomic_DNA"/>
</dbReference>
<dbReference type="EMBL" id="U00096">
    <property type="protein sequence ID" value="AAC75084.1"/>
    <property type="molecule type" value="Genomic_DNA"/>
</dbReference>
<dbReference type="EMBL" id="AP009048">
    <property type="protein sequence ID" value="BAA15854.1"/>
    <property type="molecule type" value="Genomic_DNA"/>
</dbReference>
<dbReference type="PIR" id="JS0132">
    <property type="entry name" value="XQECHH"/>
</dbReference>
<dbReference type="RefSeq" id="NP_416527.1">
    <property type="nucleotide sequence ID" value="NC_000913.3"/>
</dbReference>
<dbReference type="RefSeq" id="WP_001103560.1">
    <property type="nucleotide sequence ID" value="NZ_SSUV01000054.1"/>
</dbReference>
<dbReference type="SMR" id="P60595"/>
<dbReference type="BioGRID" id="4260419">
    <property type="interactions" value="11"/>
</dbReference>
<dbReference type="ComplexPortal" id="CPX-5158">
    <property type="entry name" value="Imidazole glycerol phosphate synthase complex"/>
</dbReference>
<dbReference type="FunCoup" id="P60595">
    <property type="interactions" value="385"/>
</dbReference>
<dbReference type="IntAct" id="P60595">
    <property type="interactions" value="2"/>
</dbReference>
<dbReference type="STRING" id="511145.b2023"/>
<dbReference type="MEROPS" id="C26.965"/>
<dbReference type="jPOST" id="P60595"/>
<dbReference type="PaxDb" id="511145-b2023"/>
<dbReference type="EnsemblBacteria" id="AAC75084">
    <property type="protein sequence ID" value="AAC75084"/>
    <property type="gene ID" value="b2023"/>
</dbReference>
<dbReference type="GeneID" id="93775150"/>
<dbReference type="GeneID" id="946544"/>
<dbReference type="KEGG" id="ecj:JW2005"/>
<dbReference type="KEGG" id="eco:b2023"/>
<dbReference type="KEGG" id="ecoc:C3026_11405"/>
<dbReference type="PATRIC" id="fig|1411691.4.peg.229"/>
<dbReference type="EchoBASE" id="EB0445"/>
<dbReference type="eggNOG" id="COG0118">
    <property type="taxonomic scope" value="Bacteria"/>
</dbReference>
<dbReference type="HOGENOM" id="CLU_071837_0_0_6"/>
<dbReference type="InParanoid" id="P60595"/>
<dbReference type="OMA" id="WVYFVHS"/>
<dbReference type="OrthoDB" id="9807137at2"/>
<dbReference type="PhylomeDB" id="P60595"/>
<dbReference type="BioCyc" id="EcoCyc:GLUTAMIDOTRANS-MONOMER"/>
<dbReference type="BioCyc" id="MetaCyc:GLUTAMIDOTRANS-MONOMER"/>
<dbReference type="BRENDA" id="4.3.1.B2">
    <property type="organism ID" value="2026"/>
</dbReference>
<dbReference type="UniPathway" id="UPA00031">
    <property type="reaction ID" value="UER00010"/>
</dbReference>
<dbReference type="PRO" id="PR:P60595"/>
<dbReference type="Proteomes" id="UP000000625">
    <property type="component" value="Chromosome"/>
</dbReference>
<dbReference type="GO" id="GO:0009382">
    <property type="term" value="C:imidazoleglycerol-phosphate synthase complex"/>
    <property type="evidence" value="ECO:0000314"/>
    <property type="project" value="EcoCyc"/>
</dbReference>
<dbReference type="GO" id="GO:0004359">
    <property type="term" value="F:glutaminase activity"/>
    <property type="evidence" value="ECO:0007669"/>
    <property type="project" value="UniProtKB-EC"/>
</dbReference>
<dbReference type="GO" id="GO:0000107">
    <property type="term" value="F:imidazoleglycerol-phosphate synthase activity"/>
    <property type="evidence" value="ECO:0000314"/>
    <property type="project" value="EcoCyc"/>
</dbReference>
<dbReference type="GO" id="GO:0016829">
    <property type="term" value="F:lyase activity"/>
    <property type="evidence" value="ECO:0007669"/>
    <property type="project" value="UniProtKB-KW"/>
</dbReference>
<dbReference type="GO" id="GO:0000105">
    <property type="term" value="P:L-histidine biosynthetic process"/>
    <property type="evidence" value="ECO:0000314"/>
    <property type="project" value="ComplexPortal"/>
</dbReference>
<dbReference type="CDD" id="cd01748">
    <property type="entry name" value="GATase1_IGP_Synthase"/>
    <property type="match status" value="1"/>
</dbReference>
<dbReference type="FunFam" id="3.40.50.880:FF:000009">
    <property type="entry name" value="Imidazole glycerol phosphate synthase subunit HisH"/>
    <property type="match status" value="1"/>
</dbReference>
<dbReference type="Gene3D" id="3.40.50.880">
    <property type="match status" value="1"/>
</dbReference>
<dbReference type="HAMAP" id="MF_00278">
    <property type="entry name" value="HisH"/>
    <property type="match status" value="1"/>
</dbReference>
<dbReference type="InterPro" id="IPR029062">
    <property type="entry name" value="Class_I_gatase-like"/>
</dbReference>
<dbReference type="InterPro" id="IPR017926">
    <property type="entry name" value="GATASE"/>
</dbReference>
<dbReference type="InterPro" id="IPR010139">
    <property type="entry name" value="Imidazole-glycPsynth_HisH"/>
</dbReference>
<dbReference type="NCBIfam" id="TIGR01855">
    <property type="entry name" value="IMP_synth_hisH"/>
    <property type="match status" value="1"/>
</dbReference>
<dbReference type="PANTHER" id="PTHR42701">
    <property type="entry name" value="IMIDAZOLE GLYCEROL PHOSPHATE SYNTHASE SUBUNIT HISH"/>
    <property type="match status" value="1"/>
</dbReference>
<dbReference type="PANTHER" id="PTHR42701:SF1">
    <property type="entry name" value="IMIDAZOLE GLYCEROL PHOSPHATE SYNTHASE SUBUNIT HISH"/>
    <property type="match status" value="1"/>
</dbReference>
<dbReference type="Pfam" id="PF00117">
    <property type="entry name" value="GATase"/>
    <property type="match status" value="1"/>
</dbReference>
<dbReference type="PIRSF" id="PIRSF000495">
    <property type="entry name" value="Amidotransf_hisH"/>
    <property type="match status" value="1"/>
</dbReference>
<dbReference type="PRINTS" id="PR00096">
    <property type="entry name" value="GATASE"/>
</dbReference>
<dbReference type="SUPFAM" id="SSF52317">
    <property type="entry name" value="Class I glutamine amidotransferase-like"/>
    <property type="match status" value="1"/>
</dbReference>
<dbReference type="PROSITE" id="PS51273">
    <property type="entry name" value="GATASE_TYPE_1"/>
    <property type="match status" value="1"/>
</dbReference>